<comment type="function">
    <text evidence="1">RNA polymerase that catalyzes the synthesis of short RNA molecules used as primers for DNA polymerase during DNA replication.</text>
</comment>
<comment type="catalytic activity">
    <reaction evidence="1">
        <text>ssDNA + n NTP = ssDNA/pppN(pN)n-1 hybrid + (n-1) diphosphate.</text>
        <dbReference type="EC" id="2.7.7.101"/>
    </reaction>
</comment>
<comment type="cofactor">
    <cofactor evidence="1">
        <name>Zn(2+)</name>
        <dbReference type="ChEBI" id="CHEBI:29105"/>
    </cofactor>
    <text evidence="1">Binds 1 zinc ion per monomer.</text>
</comment>
<comment type="cofactor">
    <cofactor evidence="1">
        <name>Mg(2+)</name>
        <dbReference type="ChEBI" id="CHEBI:18420"/>
    </cofactor>
    <text evidence="1">Binds two Mg(2+) per subunit.</text>
</comment>
<comment type="subunit">
    <text evidence="1">Monomer. Interacts with DnaB.</text>
</comment>
<comment type="domain">
    <text evidence="1">Contains an N-terminal zinc-binding domain, a central core domain that contains the primase activity, and a C-terminal DnaB-binding domain.</text>
</comment>
<comment type="similarity">
    <text evidence="1">Belongs to the DnaG primase family.</text>
</comment>
<organism>
    <name type="scientific">Shigella flexneri</name>
    <dbReference type="NCBI Taxonomy" id="623"/>
    <lineage>
        <taxon>Bacteria</taxon>
        <taxon>Pseudomonadati</taxon>
        <taxon>Pseudomonadota</taxon>
        <taxon>Gammaproteobacteria</taxon>
        <taxon>Enterobacterales</taxon>
        <taxon>Enterobacteriaceae</taxon>
        <taxon>Shigella</taxon>
    </lineage>
</organism>
<sequence length="581" mass="65565">MAGRIPRVFINDLLARTDIVDLIDARVKLKKQGKNFHACCPFHNEKTPSFTVNGEKQFYHCFGCGAHGNAIDFLMNYDKLEFVETVEELAAMHNLEVPFEAGSGPSQIERHQRQTLYQLMDGLNTFYQQSLQQPVATSARQYLEKRGLSHEVIARFAIGFAPPGWDNVLKRFGGNPENRQSLIDAGMLVTNDQGRSYDRFRERVMFPIRDKRGRVIGFGGRVLGNDTPKYLNSPETDIFHKGRQLYGLYEAQQDNAEPNRLLVVEGYMDVVALAQYGINYAVASLGTSTTADHIQLLFRATNNVICCYDGDRAGRDAAWRALETALPYMTDGRQLRFMFLPDGEDPDTLVRKEGKEAFEARMEQAMPLSAFLFNSLMPQVDLSTPDGRARLSTLALPLISQVPGETLRIYLRQELGNKLGILDDSQLERLMPKAAESGVSRPVPQLKRTTMRILIGLLVQNPELATLVPPLENLDENKLPGLGLFRELVNTCLSQPGLTTGQLLEHYRGTNNAATLEKLSMWDDIADKNIAEQTFTDSLNHMFDSLLELRQEELIARERTHGLSNEERLELWTLNQELAKK</sequence>
<keyword id="KW-0235">DNA replication</keyword>
<keyword id="KW-0238">DNA-binding</keyword>
<keyword id="KW-0240">DNA-directed RNA polymerase</keyword>
<keyword id="KW-0460">Magnesium</keyword>
<keyword id="KW-0479">Metal-binding</keyword>
<keyword id="KW-0548">Nucleotidyltransferase</keyword>
<keyword id="KW-0639">Primosome</keyword>
<keyword id="KW-1185">Reference proteome</keyword>
<keyword id="KW-0804">Transcription</keyword>
<keyword id="KW-0808">Transferase</keyword>
<keyword id="KW-0862">Zinc</keyword>
<keyword id="KW-0863">Zinc-finger</keyword>
<dbReference type="EC" id="2.7.7.101" evidence="1"/>
<dbReference type="EMBL" id="AE005674">
    <property type="protein sequence ID" value="AAN44583.1"/>
    <property type="molecule type" value="Genomic_DNA"/>
</dbReference>
<dbReference type="EMBL" id="AE014073">
    <property type="protein sequence ID" value="AAP18395.1"/>
    <property type="molecule type" value="Genomic_DNA"/>
</dbReference>
<dbReference type="RefSeq" id="NP_708876.1">
    <property type="nucleotide sequence ID" value="NC_004337.2"/>
</dbReference>
<dbReference type="RefSeq" id="WP_000918827.1">
    <property type="nucleotide sequence ID" value="NZ_WPGW01000061.1"/>
</dbReference>
<dbReference type="BMRB" id="P0ABS7"/>
<dbReference type="SMR" id="P0ABS7"/>
<dbReference type="STRING" id="198214.SF3107"/>
<dbReference type="PaxDb" id="198214-SF3107"/>
<dbReference type="GeneID" id="1026671"/>
<dbReference type="GeneID" id="93778927"/>
<dbReference type="KEGG" id="sfl:SF3107"/>
<dbReference type="KEGG" id="sfx:S3312"/>
<dbReference type="PATRIC" id="fig|198214.7.peg.3686"/>
<dbReference type="HOGENOM" id="CLU_013501_5_4_6"/>
<dbReference type="Proteomes" id="UP000001006">
    <property type="component" value="Chromosome"/>
</dbReference>
<dbReference type="Proteomes" id="UP000002673">
    <property type="component" value="Chromosome"/>
</dbReference>
<dbReference type="GO" id="GO:0005737">
    <property type="term" value="C:cytoplasm"/>
    <property type="evidence" value="ECO:0007669"/>
    <property type="project" value="TreeGrafter"/>
</dbReference>
<dbReference type="GO" id="GO:0000428">
    <property type="term" value="C:DNA-directed RNA polymerase complex"/>
    <property type="evidence" value="ECO:0007669"/>
    <property type="project" value="UniProtKB-KW"/>
</dbReference>
<dbReference type="GO" id="GO:1990077">
    <property type="term" value="C:primosome complex"/>
    <property type="evidence" value="ECO:0007669"/>
    <property type="project" value="UniProtKB-KW"/>
</dbReference>
<dbReference type="GO" id="GO:0003677">
    <property type="term" value="F:DNA binding"/>
    <property type="evidence" value="ECO:0007669"/>
    <property type="project" value="UniProtKB-KW"/>
</dbReference>
<dbReference type="GO" id="GO:0003899">
    <property type="term" value="F:DNA-directed RNA polymerase activity"/>
    <property type="evidence" value="ECO:0007669"/>
    <property type="project" value="InterPro"/>
</dbReference>
<dbReference type="GO" id="GO:0008270">
    <property type="term" value="F:zinc ion binding"/>
    <property type="evidence" value="ECO:0007669"/>
    <property type="project" value="UniProtKB-UniRule"/>
</dbReference>
<dbReference type="GO" id="GO:0006269">
    <property type="term" value="P:DNA replication, synthesis of primer"/>
    <property type="evidence" value="ECO:0007669"/>
    <property type="project" value="UniProtKB-UniRule"/>
</dbReference>
<dbReference type="CDD" id="cd03364">
    <property type="entry name" value="TOPRIM_DnaG_primases"/>
    <property type="match status" value="1"/>
</dbReference>
<dbReference type="FunFam" id="1.10.860.10:FF:000003">
    <property type="entry name" value="DNA primase"/>
    <property type="match status" value="1"/>
</dbReference>
<dbReference type="FunFam" id="1.20.50.20:FF:000001">
    <property type="entry name" value="DNA primase"/>
    <property type="match status" value="1"/>
</dbReference>
<dbReference type="FunFam" id="3.40.1360.10:FF:000002">
    <property type="entry name" value="DNA primase"/>
    <property type="match status" value="1"/>
</dbReference>
<dbReference type="FunFam" id="3.90.580.10:FF:000001">
    <property type="entry name" value="DNA primase"/>
    <property type="match status" value="1"/>
</dbReference>
<dbReference type="FunFam" id="3.90.980.10:FF:000001">
    <property type="entry name" value="DNA primase"/>
    <property type="match status" value="1"/>
</dbReference>
<dbReference type="Gene3D" id="3.40.1360.10">
    <property type="match status" value="1"/>
</dbReference>
<dbReference type="Gene3D" id="3.90.980.10">
    <property type="entry name" value="DNA primase, catalytic core, N-terminal domain"/>
    <property type="match status" value="1"/>
</dbReference>
<dbReference type="Gene3D" id="1.10.860.10">
    <property type="entry name" value="DNAb Helicase, Chain A"/>
    <property type="match status" value="1"/>
</dbReference>
<dbReference type="Gene3D" id="1.20.50.20">
    <property type="entry name" value="DnaG, RNA polymerase domain, helical bundle"/>
    <property type="match status" value="1"/>
</dbReference>
<dbReference type="Gene3D" id="3.90.580.10">
    <property type="entry name" value="Zinc finger, CHC2-type domain"/>
    <property type="match status" value="1"/>
</dbReference>
<dbReference type="HAMAP" id="MF_00974">
    <property type="entry name" value="DNA_primase_DnaG"/>
    <property type="match status" value="1"/>
</dbReference>
<dbReference type="InterPro" id="IPR016136">
    <property type="entry name" value="DNA_helicase_N/primase_C"/>
</dbReference>
<dbReference type="InterPro" id="IPR037068">
    <property type="entry name" value="DNA_primase_core_N_sf"/>
</dbReference>
<dbReference type="InterPro" id="IPR019475">
    <property type="entry name" value="DNA_primase_DnaB-bd"/>
</dbReference>
<dbReference type="InterPro" id="IPR006295">
    <property type="entry name" value="DNA_primase_DnaG"/>
</dbReference>
<dbReference type="InterPro" id="IPR013173">
    <property type="entry name" value="DNA_primase_DnaG_DnaB-bd_dom"/>
</dbReference>
<dbReference type="InterPro" id="IPR036977">
    <property type="entry name" value="DNA_primase_Znf_CHC2"/>
</dbReference>
<dbReference type="InterPro" id="IPR030846">
    <property type="entry name" value="DnaG_bac"/>
</dbReference>
<dbReference type="InterPro" id="IPR013264">
    <property type="entry name" value="DNAG_N"/>
</dbReference>
<dbReference type="InterPro" id="IPR050219">
    <property type="entry name" value="DnaG_primase"/>
</dbReference>
<dbReference type="InterPro" id="IPR034151">
    <property type="entry name" value="TOPRIM_DnaG_bac"/>
</dbReference>
<dbReference type="InterPro" id="IPR006171">
    <property type="entry name" value="TOPRIM_dom"/>
</dbReference>
<dbReference type="InterPro" id="IPR002694">
    <property type="entry name" value="Znf_CHC2"/>
</dbReference>
<dbReference type="NCBIfam" id="TIGR01391">
    <property type="entry name" value="dnaG"/>
    <property type="match status" value="1"/>
</dbReference>
<dbReference type="PANTHER" id="PTHR30313">
    <property type="entry name" value="DNA PRIMASE"/>
    <property type="match status" value="1"/>
</dbReference>
<dbReference type="PANTHER" id="PTHR30313:SF2">
    <property type="entry name" value="DNA PRIMASE"/>
    <property type="match status" value="1"/>
</dbReference>
<dbReference type="Pfam" id="PF10410">
    <property type="entry name" value="DnaB_bind"/>
    <property type="match status" value="1"/>
</dbReference>
<dbReference type="Pfam" id="PF08278">
    <property type="entry name" value="DnaG_DnaB_bind"/>
    <property type="match status" value="1"/>
</dbReference>
<dbReference type="Pfam" id="PF08275">
    <property type="entry name" value="DNAG_N"/>
    <property type="match status" value="1"/>
</dbReference>
<dbReference type="Pfam" id="PF13155">
    <property type="entry name" value="Toprim_2"/>
    <property type="match status" value="1"/>
</dbReference>
<dbReference type="Pfam" id="PF01807">
    <property type="entry name" value="Zn_ribbon_DnaG"/>
    <property type="match status" value="1"/>
</dbReference>
<dbReference type="PIRSF" id="PIRSF002811">
    <property type="entry name" value="DnaG"/>
    <property type="match status" value="1"/>
</dbReference>
<dbReference type="SMART" id="SM00766">
    <property type="entry name" value="DnaG_DnaB_bind"/>
    <property type="match status" value="1"/>
</dbReference>
<dbReference type="SMART" id="SM00493">
    <property type="entry name" value="TOPRIM"/>
    <property type="match status" value="1"/>
</dbReference>
<dbReference type="SMART" id="SM00400">
    <property type="entry name" value="ZnF_CHCC"/>
    <property type="match status" value="1"/>
</dbReference>
<dbReference type="SUPFAM" id="SSF56731">
    <property type="entry name" value="DNA primase core"/>
    <property type="match status" value="1"/>
</dbReference>
<dbReference type="SUPFAM" id="SSF117023">
    <property type="entry name" value="DNA primase DnaG, C-terminal domain"/>
    <property type="match status" value="1"/>
</dbReference>
<dbReference type="SUPFAM" id="SSF57783">
    <property type="entry name" value="Zinc beta-ribbon"/>
    <property type="match status" value="1"/>
</dbReference>
<dbReference type="PROSITE" id="PS50880">
    <property type="entry name" value="TOPRIM"/>
    <property type="match status" value="1"/>
</dbReference>
<reference key="1">
    <citation type="journal article" date="2002" name="Nucleic Acids Res.">
        <title>Genome sequence of Shigella flexneri 2a: insights into pathogenicity through comparison with genomes of Escherichia coli K12 and O157.</title>
        <authorList>
            <person name="Jin Q."/>
            <person name="Yuan Z."/>
            <person name="Xu J."/>
            <person name="Wang Y."/>
            <person name="Shen Y."/>
            <person name="Lu W."/>
            <person name="Wang J."/>
            <person name="Liu H."/>
            <person name="Yang J."/>
            <person name="Yang F."/>
            <person name="Zhang X."/>
            <person name="Zhang J."/>
            <person name="Yang G."/>
            <person name="Wu H."/>
            <person name="Qu D."/>
            <person name="Dong J."/>
            <person name="Sun L."/>
            <person name="Xue Y."/>
            <person name="Zhao A."/>
            <person name="Gao Y."/>
            <person name="Zhu J."/>
            <person name="Kan B."/>
            <person name="Ding K."/>
            <person name="Chen S."/>
            <person name="Cheng H."/>
            <person name="Yao Z."/>
            <person name="He B."/>
            <person name="Chen R."/>
            <person name="Ma D."/>
            <person name="Qiang B."/>
            <person name="Wen Y."/>
            <person name="Hou Y."/>
            <person name="Yu J."/>
        </authorList>
    </citation>
    <scope>NUCLEOTIDE SEQUENCE [LARGE SCALE GENOMIC DNA]</scope>
    <source>
        <strain>301 / Serotype 2a</strain>
    </source>
</reference>
<reference key="2">
    <citation type="journal article" date="2003" name="Infect. Immun.">
        <title>Complete genome sequence and comparative genomics of Shigella flexneri serotype 2a strain 2457T.</title>
        <authorList>
            <person name="Wei J."/>
            <person name="Goldberg M.B."/>
            <person name="Burland V."/>
            <person name="Venkatesan M.M."/>
            <person name="Deng W."/>
            <person name="Fournier G."/>
            <person name="Mayhew G.F."/>
            <person name="Plunkett G. III"/>
            <person name="Rose D.J."/>
            <person name="Darling A."/>
            <person name="Mau B."/>
            <person name="Perna N.T."/>
            <person name="Payne S.M."/>
            <person name="Runyen-Janecky L.J."/>
            <person name="Zhou S."/>
            <person name="Schwartz D.C."/>
            <person name="Blattner F.R."/>
        </authorList>
    </citation>
    <scope>NUCLEOTIDE SEQUENCE [LARGE SCALE GENOMIC DNA]</scope>
    <source>
        <strain>ATCC 700930 / 2457T / Serotype 2a</strain>
    </source>
</reference>
<feature type="chain" id="PRO_0000180517" description="DNA primase">
    <location>
        <begin position="1"/>
        <end position="581"/>
    </location>
</feature>
<feature type="domain" description="Toprim" evidence="1">
    <location>
        <begin position="259"/>
        <end position="341"/>
    </location>
</feature>
<feature type="zinc finger region" description="CHC2-type" evidence="1">
    <location>
        <begin position="40"/>
        <end position="64"/>
    </location>
</feature>
<feature type="binding site" evidence="1">
    <location>
        <position position="265"/>
    </location>
    <ligand>
        <name>Mg(2+)</name>
        <dbReference type="ChEBI" id="CHEBI:18420"/>
        <label>1</label>
        <note>catalytic</note>
    </ligand>
</feature>
<feature type="binding site" evidence="1">
    <location>
        <position position="309"/>
    </location>
    <ligand>
        <name>Mg(2+)</name>
        <dbReference type="ChEBI" id="CHEBI:18420"/>
        <label>1</label>
        <note>catalytic</note>
    </ligand>
</feature>
<feature type="binding site" evidence="1">
    <location>
        <position position="309"/>
    </location>
    <ligand>
        <name>Mg(2+)</name>
        <dbReference type="ChEBI" id="CHEBI:18420"/>
        <label>2</label>
    </ligand>
</feature>
<feature type="binding site" evidence="1">
    <location>
        <position position="311"/>
    </location>
    <ligand>
        <name>Mg(2+)</name>
        <dbReference type="ChEBI" id="CHEBI:18420"/>
        <label>2</label>
    </ligand>
</feature>
<accession>P0ABS7</accession>
<accession>P02922</accession>
<accession>P02923</accession>
<accession>Q47613</accession>
<name>DNAG_SHIFL</name>
<protein>
    <recommendedName>
        <fullName evidence="1">DNA primase</fullName>
        <ecNumber evidence="1">2.7.7.101</ecNumber>
    </recommendedName>
</protein>
<gene>
    <name evidence="1" type="primary">dnaG</name>
    <name type="ordered locus">SF3107</name>
    <name type="ordered locus">S3312</name>
</gene>
<evidence type="ECO:0000255" key="1">
    <source>
        <dbReference type="HAMAP-Rule" id="MF_00974"/>
    </source>
</evidence>
<proteinExistence type="inferred from homology"/>